<sequence length="109" mass="11816">MEVKAIHRGARISAQKTRLVADQIRGLPVDKALNVLTFSPKKAAGIVKKVVLSAIANAEHNEGADIDELKIKSIYVDKAASLKRFTARAKGRGNRIEKQSCHITVTVGN</sequence>
<feature type="chain" id="PRO_1000052548" description="Large ribosomal subunit protein uL22">
    <location>
        <begin position="1"/>
        <end position="109"/>
    </location>
</feature>
<reference key="1">
    <citation type="journal article" date="2010" name="Genome Biol. Evol.">
        <title>Continuing evolution of Burkholderia mallei through genome reduction and large-scale rearrangements.</title>
        <authorList>
            <person name="Losada L."/>
            <person name="Ronning C.M."/>
            <person name="DeShazer D."/>
            <person name="Woods D."/>
            <person name="Fedorova N."/>
            <person name="Kim H.S."/>
            <person name="Shabalina S.A."/>
            <person name="Pearson T.R."/>
            <person name="Brinkac L."/>
            <person name="Tan P."/>
            <person name="Nandi T."/>
            <person name="Crabtree J."/>
            <person name="Badger J."/>
            <person name="Beckstrom-Sternberg S."/>
            <person name="Saqib M."/>
            <person name="Schutzer S.E."/>
            <person name="Keim P."/>
            <person name="Nierman W.C."/>
        </authorList>
    </citation>
    <scope>NUCLEOTIDE SEQUENCE [LARGE SCALE GENOMIC DNA]</scope>
    <source>
        <strain>SAVP1</strain>
    </source>
</reference>
<protein>
    <recommendedName>
        <fullName evidence="1">Large ribosomal subunit protein uL22</fullName>
    </recommendedName>
    <alternativeName>
        <fullName evidence="2">50S ribosomal protein L22</fullName>
    </alternativeName>
</protein>
<proteinExistence type="inferred from homology"/>
<evidence type="ECO:0000255" key="1">
    <source>
        <dbReference type="HAMAP-Rule" id="MF_01331"/>
    </source>
</evidence>
<evidence type="ECO:0000305" key="2"/>
<dbReference type="EMBL" id="CP000526">
    <property type="protein sequence ID" value="ABM52143.1"/>
    <property type="molecule type" value="Genomic_DNA"/>
</dbReference>
<dbReference type="RefSeq" id="WP_004199272.1">
    <property type="nucleotide sequence ID" value="NC_008785.1"/>
</dbReference>
<dbReference type="SMR" id="A1V898"/>
<dbReference type="GeneID" id="98107155"/>
<dbReference type="KEGG" id="bmv:BMASAVP1_A3164"/>
<dbReference type="HOGENOM" id="CLU_083987_3_3_4"/>
<dbReference type="GO" id="GO:0022625">
    <property type="term" value="C:cytosolic large ribosomal subunit"/>
    <property type="evidence" value="ECO:0007669"/>
    <property type="project" value="TreeGrafter"/>
</dbReference>
<dbReference type="GO" id="GO:0019843">
    <property type="term" value="F:rRNA binding"/>
    <property type="evidence" value="ECO:0007669"/>
    <property type="project" value="UniProtKB-UniRule"/>
</dbReference>
<dbReference type="GO" id="GO:0003735">
    <property type="term" value="F:structural constituent of ribosome"/>
    <property type="evidence" value="ECO:0007669"/>
    <property type="project" value="InterPro"/>
</dbReference>
<dbReference type="GO" id="GO:0006412">
    <property type="term" value="P:translation"/>
    <property type="evidence" value="ECO:0007669"/>
    <property type="project" value="UniProtKB-UniRule"/>
</dbReference>
<dbReference type="CDD" id="cd00336">
    <property type="entry name" value="Ribosomal_L22"/>
    <property type="match status" value="1"/>
</dbReference>
<dbReference type="FunFam" id="3.90.470.10:FF:000001">
    <property type="entry name" value="50S ribosomal protein L22"/>
    <property type="match status" value="1"/>
</dbReference>
<dbReference type="Gene3D" id="3.90.470.10">
    <property type="entry name" value="Ribosomal protein L22/L17"/>
    <property type="match status" value="1"/>
</dbReference>
<dbReference type="HAMAP" id="MF_01331_B">
    <property type="entry name" value="Ribosomal_uL22_B"/>
    <property type="match status" value="1"/>
</dbReference>
<dbReference type="InterPro" id="IPR001063">
    <property type="entry name" value="Ribosomal_uL22"/>
</dbReference>
<dbReference type="InterPro" id="IPR005727">
    <property type="entry name" value="Ribosomal_uL22_bac/chlpt-type"/>
</dbReference>
<dbReference type="InterPro" id="IPR047867">
    <property type="entry name" value="Ribosomal_uL22_bac/org-type"/>
</dbReference>
<dbReference type="InterPro" id="IPR018260">
    <property type="entry name" value="Ribosomal_uL22_CS"/>
</dbReference>
<dbReference type="InterPro" id="IPR036394">
    <property type="entry name" value="Ribosomal_uL22_sf"/>
</dbReference>
<dbReference type="NCBIfam" id="TIGR01044">
    <property type="entry name" value="rplV_bact"/>
    <property type="match status" value="1"/>
</dbReference>
<dbReference type="PANTHER" id="PTHR13501">
    <property type="entry name" value="CHLOROPLAST 50S RIBOSOMAL PROTEIN L22-RELATED"/>
    <property type="match status" value="1"/>
</dbReference>
<dbReference type="PANTHER" id="PTHR13501:SF8">
    <property type="entry name" value="LARGE RIBOSOMAL SUBUNIT PROTEIN UL22M"/>
    <property type="match status" value="1"/>
</dbReference>
<dbReference type="Pfam" id="PF00237">
    <property type="entry name" value="Ribosomal_L22"/>
    <property type="match status" value="1"/>
</dbReference>
<dbReference type="SUPFAM" id="SSF54843">
    <property type="entry name" value="Ribosomal protein L22"/>
    <property type="match status" value="1"/>
</dbReference>
<dbReference type="PROSITE" id="PS00464">
    <property type="entry name" value="RIBOSOMAL_L22"/>
    <property type="match status" value="1"/>
</dbReference>
<keyword id="KW-0687">Ribonucleoprotein</keyword>
<keyword id="KW-0689">Ribosomal protein</keyword>
<keyword id="KW-0694">RNA-binding</keyword>
<keyword id="KW-0699">rRNA-binding</keyword>
<organism>
    <name type="scientific">Burkholderia mallei (strain SAVP1)</name>
    <dbReference type="NCBI Taxonomy" id="320388"/>
    <lineage>
        <taxon>Bacteria</taxon>
        <taxon>Pseudomonadati</taxon>
        <taxon>Pseudomonadota</taxon>
        <taxon>Betaproteobacteria</taxon>
        <taxon>Burkholderiales</taxon>
        <taxon>Burkholderiaceae</taxon>
        <taxon>Burkholderia</taxon>
        <taxon>pseudomallei group</taxon>
    </lineage>
</organism>
<comment type="function">
    <text evidence="1">This protein binds specifically to 23S rRNA; its binding is stimulated by other ribosomal proteins, e.g. L4, L17, and L20. It is important during the early stages of 50S assembly. It makes multiple contacts with different domains of the 23S rRNA in the assembled 50S subunit and ribosome (By similarity).</text>
</comment>
<comment type="function">
    <text evidence="1">The globular domain of the protein is located near the polypeptide exit tunnel on the outside of the subunit, while an extended beta-hairpin is found that lines the wall of the exit tunnel in the center of the 70S ribosome.</text>
</comment>
<comment type="subunit">
    <text evidence="1">Part of the 50S ribosomal subunit.</text>
</comment>
<comment type="similarity">
    <text evidence="1">Belongs to the universal ribosomal protein uL22 family.</text>
</comment>
<name>RL22_BURMS</name>
<gene>
    <name evidence="1" type="primary">rplV</name>
    <name type="ordered locus">BMASAVP1_A3164</name>
</gene>
<accession>A1V898</accession>